<organism>
    <name type="scientific">Novosphingobium aromaticivorans (strain ATCC 700278 / DSM 12444 / CCUG 56034 / CIP 105152 / NBRC 16084 / F199)</name>
    <dbReference type="NCBI Taxonomy" id="279238"/>
    <lineage>
        <taxon>Bacteria</taxon>
        <taxon>Pseudomonadati</taxon>
        <taxon>Pseudomonadota</taxon>
        <taxon>Alphaproteobacteria</taxon>
        <taxon>Sphingomonadales</taxon>
        <taxon>Sphingomonadaceae</taxon>
        <taxon>Novosphingobium</taxon>
    </lineage>
</organism>
<proteinExistence type="inferred from homology"/>
<keyword id="KW-0028">Amino-acid biosynthesis</keyword>
<keyword id="KW-0067">ATP-binding</keyword>
<keyword id="KW-0963">Cytoplasm</keyword>
<keyword id="KW-0368">Histidine biosynthesis</keyword>
<keyword id="KW-0378">Hydrolase</keyword>
<keyword id="KW-0547">Nucleotide-binding</keyword>
<keyword id="KW-1185">Reference proteome</keyword>
<gene>
    <name evidence="1" type="primary">hisE</name>
    <name type="ordered locus">Saro_1011</name>
</gene>
<feature type="chain" id="PRO_0000319655" description="Phosphoribosyl-ATP pyrophosphatase">
    <location>
        <begin position="1"/>
        <end position="107"/>
    </location>
</feature>
<name>HIS2_NOVAD</name>
<evidence type="ECO:0000255" key="1">
    <source>
        <dbReference type="HAMAP-Rule" id="MF_01020"/>
    </source>
</evidence>
<reference key="1">
    <citation type="submission" date="2006-01" db="EMBL/GenBank/DDBJ databases">
        <title>Complete sequence of Novosphingobium aromaticivorans DSM 12444.</title>
        <authorList>
            <consortium name="US DOE Joint Genome Institute"/>
            <person name="Copeland A."/>
            <person name="Lucas S."/>
            <person name="Lapidus A."/>
            <person name="Barry K."/>
            <person name="Detter J.C."/>
            <person name="Glavina T."/>
            <person name="Hammon N."/>
            <person name="Israni S."/>
            <person name="Pitluck S."/>
            <person name="Chain P."/>
            <person name="Malfatti S."/>
            <person name="Shin M."/>
            <person name="Vergez L."/>
            <person name="Schmutz J."/>
            <person name="Larimer F."/>
            <person name="Land M."/>
            <person name="Kyrpides N."/>
            <person name="Ivanova N."/>
            <person name="Fredrickson J."/>
            <person name="Balkwill D."/>
            <person name="Romine M.F."/>
            <person name="Richardson P."/>
        </authorList>
    </citation>
    <scope>NUCLEOTIDE SEQUENCE [LARGE SCALE GENOMIC DNA]</scope>
    <source>
        <strain>ATCC 700278 / DSM 12444 / CCUG 56034 / CIP 105152 / NBRC 16084 / F199</strain>
    </source>
</reference>
<dbReference type="EC" id="3.6.1.31" evidence="1"/>
<dbReference type="EMBL" id="CP000248">
    <property type="protein sequence ID" value="ABD25456.1"/>
    <property type="molecule type" value="Genomic_DNA"/>
</dbReference>
<dbReference type="RefSeq" id="WP_011444670.1">
    <property type="nucleotide sequence ID" value="NC_007794.1"/>
</dbReference>
<dbReference type="SMR" id="Q2G9L7"/>
<dbReference type="STRING" id="279238.Saro_1011"/>
<dbReference type="KEGG" id="nar:Saro_1011"/>
<dbReference type="eggNOG" id="COG0140">
    <property type="taxonomic scope" value="Bacteria"/>
</dbReference>
<dbReference type="HOGENOM" id="CLU_123337_1_2_5"/>
<dbReference type="UniPathway" id="UPA00031">
    <property type="reaction ID" value="UER00007"/>
</dbReference>
<dbReference type="Proteomes" id="UP000009134">
    <property type="component" value="Chromosome"/>
</dbReference>
<dbReference type="GO" id="GO:0005737">
    <property type="term" value="C:cytoplasm"/>
    <property type="evidence" value="ECO:0007669"/>
    <property type="project" value="UniProtKB-SubCell"/>
</dbReference>
<dbReference type="GO" id="GO:0005524">
    <property type="term" value="F:ATP binding"/>
    <property type="evidence" value="ECO:0007669"/>
    <property type="project" value="UniProtKB-KW"/>
</dbReference>
<dbReference type="GO" id="GO:0004636">
    <property type="term" value="F:phosphoribosyl-ATP diphosphatase activity"/>
    <property type="evidence" value="ECO:0007669"/>
    <property type="project" value="UniProtKB-UniRule"/>
</dbReference>
<dbReference type="GO" id="GO:0000105">
    <property type="term" value="P:L-histidine biosynthetic process"/>
    <property type="evidence" value="ECO:0007669"/>
    <property type="project" value="UniProtKB-UniRule"/>
</dbReference>
<dbReference type="CDD" id="cd11534">
    <property type="entry name" value="NTP-PPase_HisIE_like"/>
    <property type="match status" value="1"/>
</dbReference>
<dbReference type="FunFam" id="1.10.287.1080:FF:000002">
    <property type="entry name" value="Histidine biosynthesis bifunctional protein HisIE"/>
    <property type="match status" value="1"/>
</dbReference>
<dbReference type="Gene3D" id="1.10.287.1080">
    <property type="entry name" value="MazG-like"/>
    <property type="match status" value="1"/>
</dbReference>
<dbReference type="HAMAP" id="MF_01020">
    <property type="entry name" value="HisE"/>
    <property type="match status" value="1"/>
</dbReference>
<dbReference type="InterPro" id="IPR008179">
    <property type="entry name" value="HisE"/>
</dbReference>
<dbReference type="InterPro" id="IPR021130">
    <property type="entry name" value="PRib-ATP_PPHydrolase-like"/>
</dbReference>
<dbReference type="NCBIfam" id="TIGR03188">
    <property type="entry name" value="histidine_hisI"/>
    <property type="match status" value="1"/>
</dbReference>
<dbReference type="NCBIfam" id="NF001611">
    <property type="entry name" value="PRK00400.1-3"/>
    <property type="match status" value="1"/>
</dbReference>
<dbReference type="NCBIfam" id="NF001613">
    <property type="entry name" value="PRK00400.1-5"/>
    <property type="match status" value="1"/>
</dbReference>
<dbReference type="PANTHER" id="PTHR42945">
    <property type="entry name" value="HISTIDINE BIOSYNTHESIS BIFUNCTIONAL PROTEIN"/>
    <property type="match status" value="1"/>
</dbReference>
<dbReference type="PANTHER" id="PTHR42945:SF9">
    <property type="entry name" value="HISTIDINE BIOSYNTHESIS BIFUNCTIONAL PROTEIN HISIE"/>
    <property type="match status" value="1"/>
</dbReference>
<dbReference type="Pfam" id="PF01503">
    <property type="entry name" value="PRA-PH"/>
    <property type="match status" value="1"/>
</dbReference>
<dbReference type="SUPFAM" id="SSF101386">
    <property type="entry name" value="all-alpha NTP pyrophosphatases"/>
    <property type="match status" value="1"/>
</dbReference>
<sequence length="107" mass="11327">MEHGEILARLEATIAERRLGDPSASYVAKLNAKGLAKIAQKVGEEGTETVIAALAGDRKELVGEAADLIFHLMVLLSAKDVPFAEVLAELARREGTSGIAEKASRSN</sequence>
<comment type="catalytic activity">
    <reaction evidence="1">
        <text>1-(5-phospho-beta-D-ribosyl)-ATP + H2O = 1-(5-phospho-beta-D-ribosyl)-5'-AMP + diphosphate + H(+)</text>
        <dbReference type="Rhea" id="RHEA:22828"/>
        <dbReference type="ChEBI" id="CHEBI:15377"/>
        <dbReference type="ChEBI" id="CHEBI:15378"/>
        <dbReference type="ChEBI" id="CHEBI:33019"/>
        <dbReference type="ChEBI" id="CHEBI:59457"/>
        <dbReference type="ChEBI" id="CHEBI:73183"/>
        <dbReference type="EC" id="3.6.1.31"/>
    </reaction>
</comment>
<comment type="pathway">
    <text evidence="1">Amino-acid biosynthesis; L-histidine biosynthesis; L-histidine from 5-phospho-alpha-D-ribose 1-diphosphate: step 2/9.</text>
</comment>
<comment type="subcellular location">
    <subcellularLocation>
        <location evidence="1">Cytoplasm</location>
    </subcellularLocation>
</comment>
<comment type="similarity">
    <text evidence="1">Belongs to the PRA-PH family.</text>
</comment>
<accession>Q2G9L7</accession>
<protein>
    <recommendedName>
        <fullName evidence="1">Phosphoribosyl-ATP pyrophosphatase</fullName>
        <shortName evidence="1">PRA-PH</shortName>
        <ecNumber evidence="1">3.6.1.31</ecNumber>
    </recommendedName>
</protein>